<comment type="function">
    <text evidence="2 3 4">Secretory calcium-dependent phospholipase A2 that primarily targets dietary phospholipids in the intestinal tract. Hydrolyzes the ester bond of the fatty acyl group attached at sn-2 position of phospholipids (phospholipase A2 activity) with preference for phosphatidylethanolamines and phosphatidylglycerols over phosphatidylcholines. May play a role in the biosynthesis of N-acyl ethanolamines that regulate energy metabolism and inflammation in the intestinal tract. Hydrolyzes N-acyl phosphatidylethanolamines to N-acyl lysophosphatidylethanolamines, which are further cleaved by a lysophospholipase D to release N-acyl ethanolamines (By similarity). May act in an autocrine and paracrine manner (By similarity). Has anti-helminth activity in a process regulated by gut microbiota. Upon helminth infection of intestinal epithelia, directly affects phosphatidylethanolamine contents in the membrane of helminth larvae, likely controlling an array of phospholipid-mediated cellular processes such as membrane fusion and cell division while providing for better immune recognition, ultimately reducing larvae integrity and infectivity (By similarity).</text>
</comment>
<comment type="catalytic activity">
    <reaction evidence="2 3 5 6">
        <text>a 1,2-diacyl-sn-glycero-3-phosphocholine + H2O = a 1-acyl-sn-glycero-3-phosphocholine + a fatty acid + H(+)</text>
        <dbReference type="Rhea" id="RHEA:15801"/>
        <dbReference type="ChEBI" id="CHEBI:15377"/>
        <dbReference type="ChEBI" id="CHEBI:15378"/>
        <dbReference type="ChEBI" id="CHEBI:28868"/>
        <dbReference type="ChEBI" id="CHEBI:57643"/>
        <dbReference type="ChEBI" id="CHEBI:58168"/>
        <dbReference type="EC" id="3.1.1.4"/>
    </reaction>
</comment>
<comment type="catalytic activity">
    <reaction evidence="2">
        <text>1,2-ditetradecanoyl-sn-glycero-3-phosphocholine + H2O = 1-tetradecanoyl-sn-glycero-3-phosphocholine + tetradecanoate + H(+)</text>
        <dbReference type="Rhea" id="RHEA:54456"/>
        <dbReference type="ChEBI" id="CHEBI:15377"/>
        <dbReference type="ChEBI" id="CHEBI:15378"/>
        <dbReference type="ChEBI" id="CHEBI:30807"/>
        <dbReference type="ChEBI" id="CHEBI:45240"/>
        <dbReference type="ChEBI" id="CHEBI:64489"/>
    </reaction>
</comment>
<comment type="catalytic activity">
    <reaction evidence="3">
        <text>1,2-dihexadecanoyl-sn-glycero-3-phosphocholine + H2O = 1-hexadecanoyl-sn-glycero-3-phosphocholine + hexadecanoate + H(+)</text>
        <dbReference type="Rhea" id="RHEA:41223"/>
        <dbReference type="ChEBI" id="CHEBI:7896"/>
        <dbReference type="ChEBI" id="CHEBI:15377"/>
        <dbReference type="ChEBI" id="CHEBI:15378"/>
        <dbReference type="ChEBI" id="CHEBI:72998"/>
        <dbReference type="ChEBI" id="CHEBI:72999"/>
    </reaction>
    <physiologicalReaction direction="left-to-right" evidence="3">
        <dbReference type="Rhea" id="RHEA:41224"/>
    </physiologicalReaction>
</comment>
<comment type="catalytic activity">
    <reaction evidence="2">
        <text>1-hexadecanoyl-2-(9Z-octadecenoyl)-sn-glycero-3-phosphocholine + H2O = 1-hexadecanoyl-sn-glycero-3-phosphocholine + (9Z)-octadecenoate + H(+)</text>
        <dbReference type="Rhea" id="RHEA:38779"/>
        <dbReference type="ChEBI" id="CHEBI:15377"/>
        <dbReference type="ChEBI" id="CHEBI:15378"/>
        <dbReference type="ChEBI" id="CHEBI:30823"/>
        <dbReference type="ChEBI" id="CHEBI:72998"/>
        <dbReference type="ChEBI" id="CHEBI:73001"/>
    </reaction>
    <physiologicalReaction direction="left-to-right" evidence="2">
        <dbReference type="Rhea" id="RHEA:38780"/>
    </physiologicalReaction>
</comment>
<comment type="catalytic activity">
    <reaction evidence="3">
        <text>1-hexadecanoyl-2-(5Z,8Z,11Z,14Z-eicosatetraenoyl)-sn-glycero-3-phosphocholine + H2O = 1-hexadecanoyl-sn-glycero-3-phosphocholine + (5Z,8Z,11Z,14Z)-eicosatetraenoate + H(+)</text>
        <dbReference type="Rhea" id="RHEA:40427"/>
        <dbReference type="ChEBI" id="CHEBI:15377"/>
        <dbReference type="ChEBI" id="CHEBI:15378"/>
        <dbReference type="ChEBI" id="CHEBI:32395"/>
        <dbReference type="ChEBI" id="CHEBI:72998"/>
        <dbReference type="ChEBI" id="CHEBI:73003"/>
    </reaction>
    <physiologicalReaction direction="left-to-right" evidence="3">
        <dbReference type="Rhea" id="RHEA:40428"/>
    </physiologicalReaction>
</comment>
<comment type="catalytic activity">
    <reaction evidence="2">
        <text>1-hexadecanoyl-2-(9Z-octadecenoyl)-sn-glycero-3-phospho-(1'-sn-glycerol) + H2O = 1-hexadecanoyl-sn-glycero-3-phospho-(1'-sn-glycerol) + (9Z)-octadecenoate + H(+)</text>
        <dbReference type="Rhea" id="RHEA:40919"/>
        <dbReference type="ChEBI" id="CHEBI:15377"/>
        <dbReference type="ChEBI" id="CHEBI:15378"/>
        <dbReference type="ChEBI" id="CHEBI:30823"/>
        <dbReference type="ChEBI" id="CHEBI:72841"/>
        <dbReference type="ChEBI" id="CHEBI:75158"/>
    </reaction>
    <physiologicalReaction direction="left-to-right" evidence="2">
        <dbReference type="Rhea" id="RHEA:40920"/>
    </physiologicalReaction>
</comment>
<comment type="catalytic activity">
    <reaction evidence="3">
        <text>N-hexadecanoyl-1,2-di-(9Z-octadecenoyl)-sn-glycero-3-phosphoethanolamine + H2O = N-hexadecanoyl-1-(9Z-octadecenoyl)-sn-glycero-3-phosphoethanolamine + (9Z)-octadecenoate + H(+)</text>
        <dbReference type="Rhea" id="RHEA:45424"/>
        <dbReference type="ChEBI" id="CHEBI:15377"/>
        <dbReference type="ChEBI" id="CHEBI:15378"/>
        <dbReference type="ChEBI" id="CHEBI:30823"/>
        <dbReference type="ChEBI" id="CHEBI:78097"/>
        <dbReference type="ChEBI" id="CHEBI:85217"/>
    </reaction>
    <physiologicalReaction direction="left-to-right" evidence="3">
        <dbReference type="Rhea" id="RHEA:45425"/>
    </physiologicalReaction>
</comment>
<comment type="catalytic activity">
    <reaction evidence="3">
        <text>1-hexadecanoyl-2-(9Z,12Z-octadecadienoyl)-sn-glycero-3-phosphoethanolamine + H2O = 1-hexadecanoyl-sn-glycero-3-phosphoethanolamine + (9Z,12Z)-octadecadienoate + H(+)</text>
        <dbReference type="Rhea" id="RHEA:40815"/>
        <dbReference type="ChEBI" id="CHEBI:15377"/>
        <dbReference type="ChEBI" id="CHEBI:15378"/>
        <dbReference type="ChEBI" id="CHEBI:30245"/>
        <dbReference type="ChEBI" id="CHEBI:73004"/>
        <dbReference type="ChEBI" id="CHEBI:73008"/>
    </reaction>
    <physiologicalReaction direction="left-to-right" evidence="3">
        <dbReference type="Rhea" id="RHEA:40816"/>
    </physiologicalReaction>
</comment>
<comment type="catalytic activity">
    <reaction evidence="3">
        <text>N,1-dihexadecanoyl-2-(9Z,12Z-octadecadienoyl)-sn-glycero-3-phosphoethanolamine + H2O = N,1-dihexadecanoyl-sn-glycero-3-phosphoethanolamine + (9Z,12Z)-octadecadienoate + H(+)</text>
        <dbReference type="Rhea" id="RHEA:56424"/>
        <dbReference type="ChEBI" id="CHEBI:15377"/>
        <dbReference type="ChEBI" id="CHEBI:15378"/>
        <dbReference type="ChEBI" id="CHEBI:30245"/>
        <dbReference type="ChEBI" id="CHEBI:85334"/>
        <dbReference type="ChEBI" id="CHEBI:85335"/>
    </reaction>
    <physiologicalReaction direction="left-to-right" evidence="3">
        <dbReference type="Rhea" id="RHEA:56425"/>
    </physiologicalReaction>
</comment>
<comment type="cofactor">
    <cofactor evidence="15 16 17">
        <name>Ca(2+)</name>
        <dbReference type="ChEBI" id="CHEBI:29108"/>
    </cofactor>
    <text evidence="15 16 17">Binds 1 Ca(2+) ion per subunit.</text>
</comment>
<comment type="subunit">
    <text evidence="1">Monomer or homodimer.</text>
</comment>
<comment type="subcellular location">
    <subcellularLocation>
        <location evidence="2">Secreted</location>
    </subcellularLocation>
    <text evidence="2">Secreted from pancreatic acinar cells in its inactive form.</text>
</comment>
<comment type="PTM">
    <text evidence="2">Activated by trypsin cleavage in the duodenum. Can also be activated by thrombin or autocatalytically.</text>
</comment>
<comment type="similarity">
    <text evidence="14">Belongs to the phospholipase A2 family.</text>
</comment>
<protein>
    <recommendedName>
        <fullName>Phospholipase A2</fullName>
        <ecNumber evidence="2 3">3.1.1.4</ecNumber>
    </recommendedName>
    <alternativeName>
        <fullName>Group IB phospholipase A2</fullName>
    </alternativeName>
    <alternativeName>
        <fullName>Phosphatidylcholine 2-acylhydrolase 1B</fullName>
    </alternativeName>
</protein>
<dbReference type="EC" id="3.1.1.4" evidence="2 3"/>
<dbReference type="EMBL" id="Y00120">
    <property type="protein sequence ID" value="CAA68303.1"/>
    <property type="molecule type" value="mRNA"/>
</dbReference>
<dbReference type="PIR" id="A27508">
    <property type="entry name" value="PSBOA"/>
</dbReference>
<dbReference type="RefSeq" id="NP_777071.2">
    <property type="nucleotide sequence ID" value="NM_174646.3"/>
</dbReference>
<dbReference type="RefSeq" id="XP_010812367.1">
    <property type="nucleotide sequence ID" value="XM_010814065.2"/>
</dbReference>
<dbReference type="RefSeq" id="XP_015322603.1">
    <property type="nucleotide sequence ID" value="XM_015467117.1"/>
</dbReference>
<dbReference type="PDB" id="1BP2">
    <property type="method" value="X-ray"/>
    <property type="resolution" value="1.70 A"/>
    <property type="chains" value="A=23-145"/>
</dbReference>
<dbReference type="PDB" id="1BPQ">
    <property type="method" value="X-ray"/>
    <property type="resolution" value="1.80 A"/>
    <property type="chains" value="A=23-145"/>
</dbReference>
<dbReference type="PDB" id="1BVM">
    <property type="method" value="NMR"/>
    <property type="chains" value="A=23-145"/>
</dbReference>
<dbReference type="PDB" id="1C74">
    <property type="method" value="X-ray"/>
    <property type="resolution" value="1.90 A"/>
    <property type="chains" value="A=23-145"/>
</dbReference>
<dbReference type="PDB" id="1CEH">
    <property type="method" value="X-ray"/>
    <property type="resolution" value="1.90 A"/>
    <property type="chains" value="A=23-145"/>
</dbReference>
<dbReference type="PDB" id="1FDK">
    <property type="method" value="X-ray"/>
    <property type="resolution" value="1.91 A"/>
    <property type="chains" value="A=23-145"/>
</dbReference>
<dbReference type="PDB" id="1G4I">
    <property type="method" value="X-ray"/>
    <property type="resolution" value="0.97 A"/>
    <property type="chains" value="A=23-145"/>
</dbReference>
<dbReference type="PDB" id="1GH4">
    <property type="method" value="X-ray"/>
    <property type="resolution" value="1.90 A"/>
    <property type="chains" value="A=23-145"/>
</dbReference>
<dbReference type="PDB" id="1IRB">
    <property type="method" value="X-ray"/>
    <property type="resolution" value="1.90 A"/>
    <property type="chains" value="A=23-145"/>
</dbReference>
<dbReference type="PDB" id="1KVW">
    <property type="method" value="X-ray"/>
    <property type="resolution" value="1.95 A"/>
    <property type="chains" value="A=23-145"/>
</dbReference>
<dbReference type="PDB" id="1KVX">
    <property type="method" value="X-ray"/>
    <property type="resolution" value="1.90 A"/>
    <property type="chains" value="A=23-145"/>
</dbReference>
<dbReference type="PDB" id="1KVY">
    <property type="method" value="X-ray"/>
    <property type="resolution" value="1.90 A"/>
    <property type="chains" value="A=23-145"/>
</dbReference>
<dbReference type="PDB" id="1MKS">
    <property type="method" value="X-ray"/>
    <property type="resolution" value="1.90 A"/>
    <property type="chains" value="A=23-145"/>
</dbReference>
<dbReference type="PDB" id="1MKT">
    <property type="method" value="X-ray"/>
    <property type="resolution" value="1.72 A"/>
    <property type="chains" value="A=23-145"/>
</dbReference>
<dbReference type="PDB" id="1MKU">
    <property type="method" value="X-ray"/>
    <property type="resolution" value="1.80 A"/>
    <property type="chains" value="A=23-145"/>
</dbReference>
<dbReference type="PDB" id="1MKV">
    <property type="method" value="X-ray"/>
    <property type="resolution" value="1.89 A"/>
    <property type="chains" value="A=23-145"/>
</dbReference>
<dbReference type="PDB" id="1O2E">
    <property type="method" value="X-ray"/>
    <property type="resolution" value="2.60 A"/>
    <property type="chains" value="A=23-145"/>
</dbReference>
<dbReference type="PDB" id="1O3W">
    <property type="method" value="X-ray"/>
    <property type="resolution" value="1.85 A"/>
    <property type="chains" value="A=23-145"/>
</dbReference>
<dbReference type="PDB" id="1UNE">
    <property type="method" value="X-ray"/>
    <property type="resolution" value="1.50 A"/>
    <property type="chains" value="A=23-145"/>
</dbReference>
<dbReference type="PDB" id="1VKQ">
    <property type="method" value="X-ray"/>
    <property type="resolution" value="1.60 A"/>
    <property type="chains" value="A=23-145"/>
</dbReference>
<dbReference type="PDB" id="1VL9">
    <property type="method" value="X-ray"/>
    <property type="resolution" value="0.97 A"/>
    <property type="chains" value="A=23-145"/>
</dbReference>
<dbReference type="PDB" id="2B96">
    <property type="method" value="X-ray"/>
    <property type="resolution" value="1.70 A"/>
    <property type="chains" value="A=23-145"/>
</dbReference>
<dbReference type="PDB" id="2BAX">
    <property type="method" value="X-ray"/>
    <property type="resolution" value="1.10 A"/>
    <property type="chains" value="A=23-145"/>
</dbReference>
<dbReference type="PDB" id="2BCH">
    <property type="method" value="X-ray"/>
    <property type="resolution" value="1.10 A"/>
    <property type="chains" value="A=23-145"/>
</dbReference>
<dbReference type="PDB" id="2BD1">
    <property type="method" value="X-ray"/>
    <property type="resolution" value="1.90 A"/>
    <property type="chains" value="A/B=23-145"/>
</dbReference>
<dbReference type="PDB" id="2BP2">
    <property type="method" value="X-ray"/>
    <property type="resolution" value="3.00 A"/>
    <property type="chains" value="A=17-145"/>
</dbReference>
<dbReference type="PDB" id="2BPP">
    <property type="method" value="X-ray"/>
    <property type="resolution" value="1.80 A"/>
    <property type="chains" value="A=23-145"/>
</dbReference>
<dbReference type="PDB" id="2ZP3">
    <property type="method" value="X-ray"/>
    <property type="resolution" value="1.90 A"/>
    <property type="chains" value="A=23-145"/>
</dbReference>
<dbReference type="PDB" id="2ZP4">
    <property type="method" value="X-ray"/>
    <property type="resolution" value="1.90 A"/>
    <property type="chains" value="A=23-145"/>
</dbReference>
<dbReference type="PDB" id="2ZP5">
    <property type="method" value="X-ray"/>
    <property type="resolution" value="1.90 A"/>
    <property type="chains" value="A=23-145"/>
</dbReference>
<dbReference type="PDB" id="3BP2">
    <property type="method" value="X-ray"/>
    <property type="resolution" value="2.10 A"/>
    <property type="chains" value="A=24-145"/>
</dbReference>
<dbReference type="PDB" id="4BP2">
    <property type="method" value="X-ray"/>
    <property type="resolution" value="1.60 A"/>
    <property type="chains" value="A=16-145"/>
</dbReference>
<dbReference type="PDBsum" id="1BP2"/>
<dbReference type="PDBsum" id="1BPQ"/>
<dbReference type="PDBsum" id="1BVM"/>
<dbReference type="PDBsum" id="1C74"/>
<dbReference type="PDBsum" id="1CEH"/>
<dbReference type="PDBsum" id="1FDK"/>
<dbReference type="PDBsum" id="1G4I"/>
<dbReference type="PDBsum" id="1GH4"/>
<dbReference type="PDBsum" id="1IRB"/>
<dbReference type="PDBsum" id="1KVW"/>
<dbReference type="PDBsum" id="1KVX"/>
<dbReference type="PDBsum" id="1KVY"/>
<dbReference type="PDBsum" id="1MKS"/>
<dbReference type="PDBsum" id="1MKT"/>
<dbReference type="PDBsum" id="1MKU"/>
<dbReference type="PDBsum" id="1MKV"/>
<dbReference type="PDBsum" id="1O2E"/>
<dbReference type="PDBsum" id="1O3W"/>
<dbReference type="PDBsum" id="1UNE"/>
<dbReference type="PDBsum" id="1VKQ"/>
<dbReference type="PDBsum" id="1VL9"/>
<dbReference type="PDBsum" id="2B96"/>
<dbReference type="PDBsum" id="2BAX"/>
<dbReference type="PDBsum" id="2BCH"/>
<dbReference type="PDBsum" id="2BD1"/>
<dbReference type="PDBsum" id="2BP2"/>
<dbReference type="PDBsum" id="2BPP"/>
<dbReference type="PDBsum" id="2ZP3"/>
<dbReference type="PDBsum" id="2ZP4"/>
<dbReference type="PDBsum" id="2ZP5"/>
<dbReference type="PDBsum" id="3BP2"/>
<dbReference type="PDBsum" id="4BP2"/>
<dbReference type="PCDDB" id="P00593"/>
<dbReference type="SMR" id="P00593"/>
<dbReference type="FunCoup" id="P00593">
    <property type="interactions" value="248"/>
</dbReference>
<dbReference type="STRING" id="9913.ENSBTAP00000037960"/>
<dbReference type="ChEMBL" id="CHEMBL5710"/>
<dbReference type="PaxDb" id="9913-ENSBTAP00000037960"/>
<dbReference type="Ensembl" id="ENSBTAT00000038144.4">
    <property type="protein sequence ID" value="ENSBTAP00000037960.4"/>
    <property type="gene ID" value="ENSBTAG00000026732.5"/>
</dbReference>
<dbReference type="GeneID" id="282457"/>
<dbReference type="KEGG" id="bta:282457"/>
<dbReference type="CTD" id="5319"/>
<dbReference type="VEuPathDB" id="HostDB:ENSBTAG00000026732"/>
<dbReference type="VGNC" id="VGNC:106868">
    <property type="gene designation" value="PLA2G1B"/>
</dbReference>
<dbReference type="eggNOG" id="KOG4087">
    <property type="taxonomic scope" value="Eukaryota"/>
</dbReference>
<dbReference type="GeneTree" id="ENSGT00940000154885"/>
<dbReference type="HOGENOM" id="CLU_2579890_0_0_1"/>
<dbReference type="InParanoid" id="P00593"/>
<dbReference type="OMA" id="CEAFLCN"/>
<dbReference type="OrthoDB" id="5841574at2759"/>
<dbReference type="BRENDA" id="3.1.1.4">
    <property type="organism ID" value="908"/>
</dbReference>
<dbReference type="Reactome" id="R-BTA-1482788">
    <property type="pathway name" value="Acyl chain remodelling of PC"/>
</dbReference>
<dbReference type="Reactome" id="R-BTA-1482801">
    <property type="pathway name" value="Acyl chain remodelling of PS"/>
</dbReference>
<dbReference type="Reactome" id="R-BTA-1482839">
    <property type="pathway name" value="Acyl chain remodelling of PE"/>
</dbReference>
<dbReference type="Reactome" id="R-BTA-1482922">
    <property type="pathway name" value="Acyl chain remodelling of PI"/>
</dbReference>
<dbReference type="Reactome" id="R-BTA-1482925">
    <property type="pathway name" value="Acyl chain remodelling of PG"/>
</dbReference>
<dbReference type="Reactome" id="R-BTA-1483166">
    <property type="pathway name" value="Synthesis of PA"/>
</dbReference>
<dbReference type="EvolutionaryTrace" id="P00593"/>
<dbReference type="PRO" id="PR:P00593"/>
<dbReference type="Proteomes" id="UP000009136">
    <property type="component" value="Chromosome 17"/>
</dbReference>
<dbReference type="Bgee" id="ENSBTAG00000026732">
    <property type="expression patterns" value="Expressed in dorsal thalamus and 59 other cell types or tissues"/>
</dbReference>
<dbReference type="GO" id="GO:0009986">
    <property type="term" value="C:cell surface"/>
    <property type="evidence" value="ECO:0007669"/>
    <property type="project" value="Ensembl"/>
</dbReference>
<dbReference type="GO" id="GO:0005615">
    <property type="term" value="C:extracellular space"/>
    <property type="evidence" value="ECO:0007669"/>
    <property type="project" value="Ensembl"/>
</dbReference>
<dbReference type="GO" id="GO:0032052">
    <property type="term" value="F:bile acid binding"/>
    <property type="evidence" value="ECO:0000250"/>
    <property type="project" value="UniProtKB"/>
</dbReference>
<dbReference type="GO" id="GO:0005509">
    <property type="term" value="F:calcium ion binding"/>
    <property type="evidence" value="ECO:0000318"/>
    <property type="project" value="GO_Central"/>
</dbReference>
<dbReference type="GO" id="GO:0047498">
    <property type="term" value="F:calcium-dependent phospholipase A2 activity"/>
    <property type="evidence" value="ECO:0000250"/>
    <property type="project" value="UniProtKB"/>
</dbReference>
<dbReference type="GO" id="GO:0005543">
    <property type="term" value="F:phospholipid binding"/>
    <property type="evidence" value="ECO:0000318"/>
    <property type="project" value="GO_Central"/>
</dbReference>
<dbReference type="GO" id="GO:0005102">
    <property type="term" value="F:signaling receptor binding"/>
    <property type="evidence" value="ECO:0000318"/>
    <property type="project" value="GO_Central"/>
</dbReference>
<dbReference type="GO" id="GO:0019731">
    <property type="term" value="P:antibacterial humoral response"/>
    <property type="evidence" value="ECO:0007669"/>
    <property type="project" value="Ensembl"/>
</dbReference>
<dbReference type="GO" id="GO:0061844">
    <property type="term" value="P:antimicrobial humoral immune response mediated by antimicrobial peptide"/>
    <property type="evidence" value="ECO:0007669"/>
    <property type="project" value="Ensembl"/>
</dbReference>
<dbReference type="GO" id="GO:0050482">
    <property type="term" value="P:arachidonate secretion"/>
    <property type="evidence" value="ECO:0007669"/>
    <property type="project" value="InterPro"/>
</dbReference>
<dbReference type="GO" id="GO:0050830">
    <property type="term" value="P:defense response to Gram-positive bacterium"/>
    <property type="evidence" value="ECO:0007669"/>
    <property type="project" value="Ensembl"/>
</dbReference>
<dbReference type="GO" id="GO:0006633">
    <property type="term" value="P:fatty acid biosynthetic process"/>
    <property type="evidence" value="ECO:0007669"/>
    <property type="project" value="Ensembl"/>
</dbReference>
<dbReference type="GO" id="GO:0002227">
    <property type="term" value="P:innate immune response in mucosa"/>
    <property type="evidence" value="ECO:0007669"/>
    <property type="project" value="Ensembl"/>
</dbReference>
<dbReference type="GO" id="GO:0016042">
    <property type="term" value="P:lipid catabolic process"/>
    <property type="evidence" value="ECO:0007669"/>
    <property type="project" value="Ensembl"/>
</dbReference>
<dbReference type="GO" id="GO:0046470">
    <property type="term" value="P:phosphatidylcholine metabolic process"/>
    <property type="evidence" value="ECO:0000318"/>
    <property type="project" value="GO_Central"/>
</dbReference>
<dbReference type="GO" id="GO:0046471">
    <property type="term" value="P:phosphatidylglycerol metabolic process"/>
    <property type="evidence" value="ECO:0000250"/>
    <property type="project" value="UniProtKB"/>
</dbReference>
<dbReference type="GO" id="GO:0048146">
    <property type="term" value="P:positive regulation of fibroblast proliferation"/>
    <property type="evidence" value="ECO:0007669"/>
    <property type="project" value="Ensembl"/>
</dbReference>
<dbReference type="GO" id="GO:1904635">
    <property type="term" value="P:positive regulation of podocyte apoptotic process"/>
    <property type="evidence" value="ECO:0000250"/>
    <property type="project" value="UniProtKB"/>
</dbReference>
<dbReference type="CDD" id="cd00125">
    <property type="entry name" value="PLA2c"/>
    <property type="match status" value="1"/>
</dbReference>
<dbReference type="FunFam" id="1.20.90.10:FF:000011">
    <property type="entry name" value="Phospholipase A(2)"/>
    <property type="match status" value="1"/>
</dbReference>
<dbReference type="Gene3D" id="1.20.90.10">
    <property type="entry name" value="Phospholipase A2 domain"/>
    <property type="match status" value="1"/>
</dbReference>
<dbReference type="InterPro" id="IPR001211">
    <property type="entry name" value="PLipase_A2"/>
</dbReference>
<dbReference type="InterPro" id="IPR033112">
    <property type="entry name" value="PLipase_A2_Asp_AS"/>
</dbReference>
<dbReference type="InterPro" id="IPR016090">
    <property type="entry name" value="PLipase_A2_dom"/>
</dbReference>
<dbReference type="InterPro" id="IPR036444">
    <property type="entry name" value="PLipase_A2_dom_sf"/>
</dbReference>
<dbReference type="InterPro" id="IPR033113">
    <property type="entry name" value="PLipase_A2_His_AS"/>
</dbReference>
<dbReference type="PANTHER" id="PTHR11716:SF94">
    <property type="entry name" value="PHOSPHOLIPASE A2"/>
    <property type="match status" value="1"/>
</dbReference>
<dbReference type="PANTHER" id="PTHR11716">
    <property type="entry name" value="PHOSPHOLIPASE A2 FAMILY MEMBER"/>
    <property type="match status" value="1"/>
</dbReference>
<dbReference type="Pfam" id="PF00068">
    <property type="entry name" value="Phospholip_A2_1"/>
    <property type="match status" value="1"/>
</dbReference>
<dbReference type="PRINTS" id="PR00389">
    <property type="entry name" value="PHPHLIPASEA2"/>
</dbReference>
<dbReference type="SMART" id="SM00085">
    <property type="entry name" value="PA2c"/>
    <property type="match status" value="1"/>
</dbReference>
<dbReference type="SUPFAM" id="SSF48619">
    <property type="entry name" value="Phospholipase A2, PLA2"/>
    <property type="match status" value="1"/>
</dbReference>
<dbReference type="PROSITE" id="PS00119">
    <property type="entry name" value="PA2_ASP"/>
    <property type="match status" value="1"/>
</dbReference>
<dbReference type="PROSITE" id="PS00118">
    <property type="entry name" value="PA2_HIS"/>
    <property type="match status" value="1"/>
</dbReference>
<accession>P00593</accession>
<organism>
    <name type="scientific">Bos taurus</name>
    <name type="common">Bovine</name>
    <dbReference type="NCBI Taxonomy" id="9913"/>
    <lineage>
        <taxon>Eukaryota</taxon>
        <taxon>Metazoa</taxon>
        <taxon>Chordata</taxon>
        <taxon>Craniata</taxon>
        <taxon>Vertebrata</taxon>
        <taxon>Euteleostomi</taxon>
        <taxon>Mammalia</taxon>
        <taxon>Eutheria</taxon>
        <taxon>Laurasiatheria</taxon>
        <taxon>Artiodactyla</taxon>
        <taxon>Ruminantia</taxon>
        <taxon>Pecora</taxon>
        <taxon>Bovidae</taxon>
        <taxon>Bovinae</taxon>
        <taxon>Bos</taxon>
    </lineage>
</organism>
<proteinExistence type="evidence at protein level"/>
<reference key="1">
    <citation type="journal article" date="1987" name="Nucleic Acids Res.">
        <title>Sequence of a cDNA coding for bovine pancreatic phospholipase A2.</title>
        <authorList>
            <person name="Tanaka T."/>
            <person name="Kimura S."/>
            <person name="Ota Y."/>
        </authorList>
    </citation>
    <scope>NUCLEOTIDE SEQUENCE [MRNA]</scope>
</reference>
<reference key="2">
    <citation type="journal article" date="1975" name="Eur. J. Biochem.">
        <title>Isolation and properties of prophospholipase A2 from ox and sheep pancreas.</title>
        <authorList>
            <person name="Dutilh C.E."/>
            <person name="van Doren P.J."/>
            <person name="Verheul F.E.A.M."/>
            <person name="de Haas G.H."/>
        </authorList>
    </citation>
    <scope>PROTEIN SEQUENCE OF 16-22</scope>
    <scope>PYROGLUTAMATE FORMATION AT GLN-16</scope>
    <source>
        <tissue>Pancreas</tissue>
    </source>
</reference>
<reference key="3">
    <citation type="journal article" date="1978" name="Eur. J. Biochem.">
        <title>The primary structure of bovine pancreatic phospholipase A2.</title>
        <authorList>
            <person name="Fleer E.A.M."/>
            <person name="Verheij H.M."/>
            <person name="de Haas G.H."/>
        </authorList>
    </citation>
    <scope>PROTEIN SEQUENCE OF 23-145</scope>
</reference>
<reference key="4">
    <citation type="journal article" date="1978" name="J. Mol. Biol.">
        <title>Three-dimensional structure and disulfide bond connections in bovine pancreatic phospholipase A2.</title>
        <authorList>
            <person name="Dijkstra B.W."/>
            <person name="Drenth J."/>
            <person name="Kalk K.H."/>
            <person name="Vandermaelen P.J."/>
        </authorList>
    </citation>
    <scope>X-RAY CRYSTALLOGRAPHY (2.4 ANGSTROMS)</scope>
    <scope>DISULFIDE BONDS</scope>
</reference>
<reference key="5">
    <citation type="journal article" date="1981" name="Nature">
        <title>Active site and catalytic mechanism of phospholipase A2.</title>
        <authorList>
            <person name="Dijkstra B.W."/>
            <person name="Drenth J."/>
            <person name="Kalk K.H."/>
        </authorList>
    </citation>
    <scope>X-RAY CRYSTALLOGRAPHY (1.7 ANGSTROMS)</scope>
    <scope>ACTIVE SITE</scope>
    <scope>CATALYTIC MECHANISM</scope>
</reference>
<reference key="6">
    <citation type="journal article" date="1981" name="J. Mol. Biol.">
        <title>Structure of bovine pancreatic phospholipase A2 at 1.7A resolution.</title>
        <authorList>
            <person name="Dijkstra B.W."/>
            <person name="Kalk K.H."/>
            <person name="Hol W.G.J."/>
            <person name="Drenth J."/>
        </authorList>
    </citation>
    <scope>X-RAY CRYSTALLOGRAPHY (1.70 ANGSTROMS) OF 23-145 IN COMPLEX WITH CALCIUM ION</scope>
    <scope>COFACTOR</scope>
    <scope>DISULFIDE BONDS</scope>
</reference>
<reference key="7">
    <citation type="journal article" date="1982" name="Acta Crystallogr. B">
        <title>The structure of bovine pancreatic prophospholipase A2 at 3.0-A resolution.</title>
        <authorList>
            <person name="Dijkstra B.W."/>
            <person name="van Nes G.J.H."/>
            <person name="Kalk K.H."/>
            <person name="Brandenburg N.P."/>
            <person name="Hol W.G.J."/>
            <person name="Drenth J."/>
        </authorList>
    </citation>
    <scope>X-RAY CRYSTALLOGRAPHY (3.00 ANGSTROMS) OF 17-145 OF PROENZYME</scope>
    <scope>DISULFIDE BONDS</scope>
</reference>
<reference key="8">
    <citation type="journal article" date="1997" name="Biochemistry">
        <title>Phospholipase A2 engineering. Structural and functional roles of the highly conserved active site residue aspartate-99.</title>
        <authorList>
            <person name="Sekar K."/>
            <person name="Yu B.Z."/>
            <person name="Rogers J."/>
            <person name="Lutton J."/>
            <person name="Liu X."/>
            <person name="Chen X."/>
            <person name="Tsai M.-D."/>
            <person name="Jain M.K."/>
            <person name="Sundaralingam M."/>
        </authorList>
    </citation>
    <scope>X-RAY CRYSTALLOGRAPHY (1.80 ANGSTROMS) OF 23-145 IN COMPLEX WITH CALCIUM ION</scope>
    <scope>COFACTOR</scope>
    <scope>DISULFIDE BONDS</scope>
</reference>
<reference key="9">
    <citation type="journal article" date="1997" name="Biochemistry">
        <title>Crystal structure of the complex of bovine pancreatic phospholipase A2 with the inhibitor 1-hexadecyl-3-(trifluoroethyl)-sn-glycero-2-phosphomethanol.</title>
        <authorList>
            <person name="Sekar K."/>
            <person name="Eswaramoorthy S."/>
            <person name="Jain M.K."/>
            <person name="Sundaralingam M."/>
        </authorList>
    </citation>
    <scope>X-RAY CRYSTALLOGRAPHY (1.5 ANGSTROMS)</scope>
</reference>
<reference key="10">
    <citation type="journal article" date="1999" name="Acta Crystallogr. D">
        <title>Structures of the catalytic site mutants D99A and H48Q and the calcium-loop mutant D49E of phospholipase A2.</title>
        <authorList>
            <person name="Sekar K."/>
            <person name="Biswas R."/>
            <person name="Li Y."/>
            <person name="Tsai M."/>
            <person name="Sundaralingam M."/>
        </authorList>
    </citation>
    <scope>X-RAY CRYSTALLOGRAPHY (1.90 ANGSTROMS) OF 23-145 OF MUTANTS IN COMPLEX WITH CALCIUM ION</scope>
    <scope>COFACTOR</scope>
    <scope>DISULFIDE BONDS</scope>
</reference>
<reference key="11">
    <citation type="journal article" date="1999" name="Biochemistry">
        <title>Structural analysis of phospholipase A2 from functional perspective. 1. Functionally relevant solution structure and roles of the hydrogen-bonding network.</title>
        <authorList>
            <person name="Yuan C."/>
            <person name="Byeon I.-J.L."/>
            <person name="Li Y."/>
            <person name="Tsai M.-D."/>
        </authorList>
    </citation>
    <scope>STRUCTURE BY NMR</scope>
</reference>
<reference key="12">
    <citation type="journal article" date="1999" name="Biochemistry">
        <title>Structural analysis of phospholipase A2 from functional perspective. 2. Characterization of a molten globule-like state induced by site-specific mutagenesis.</title>
        <authorList>
            <person name="Yuan C."/>
            <person name="Byeon I.-J.L."/>
            <person name="Poi M.-J."/>
            <person name="Tsai M.-D."/>
        </authorList>
    </citation>
    <scope>STRUCTURE BY NMR OF MUTANTS</scope>
</reference>
<gene>
    <name type="primary">PLA2G1B</name>
</gene>
<feature type="signal peptide" evidence="13">
    <location>
        <begin position="1"/>
        <end position="15"/>
    </location>
</feature>
<feature type="propeptide" id="PRO_0000022731" description="Removed by trypsin" evidence="8">
    <location>
        <begin position="16"/>
        <end position="22"/>
    </location>
</feature>
<feature type="chain" id="PRO_0000022732" description="Phospholipase A2" evidence="8">
    <location>
        <begin position="23"/>
        <end position="145"/>
    </location>
</feature>
<feature type="active site" evidence="11">
    <location>
        <position position="70"/>
    </location>
</feature>
<feature type="active site" evidence="11">
    <location>
        <position position="121"/>
    </location>
</feature>
<feature type="binding site" evidence="7 10 12 18 19 20">
    <location>
        <position position="50"/>
    </location>
    <ligand>
        <name>Ca(2+)</name>
        <dbReference type="ChEBI" id="CHEBI:29108"/>
    </ligand>
</feature>
<feature type="binding site" evidence="7 10 12 18 19 20">
    <location>
        <position position="52"/>
    </location>
    <ligand>
        <name>Ca(2+)</name>
        <dbReference type="ChEBI" id="CHEBI:29108"/>
    </ligand>
</feature>
<feature type="binding site" evidence="7 10 12 18 19 20">
    <location>
        <position position="54"/>
    </location>
    <ligand>
        <name>Ca(2+)</name>
        <dbReference type="ChEBI" id="CHEBI:29108"/>
    </ligand>
</feature>
<feature type="binding site" evidence="7 10 12 18 19 20">
    <location>
        <position position="71"/>
    </location>
    <ligand>
        <name>Ca(2+)</name>
        <dbReference type="ChEBI" id="CHEBI:29108"/>
    </ligand>
</feature>
<feature type="modified residue" description="Pyrrolidone carboxylic acid" evidence="13">
    <location>
        <position position="16"/>
    </location>
</feature>
<feature type="disulfide bond" evidence="7 9 10 12 18 19 20">
    <location>
        <begin position="33"/>
        <end position="99"/>
    </location>
</feature>
<feature type="disulfide bond" evidence="7 9 10 12 18 19 20">
    <location>
        <begin position="49"/>
        <end position="145"/>
    </location>
</feature>
<feature type="disulfide bond" evidence="7 9 10 12 18 19 20">
    <location>
        <begin position="51"/>
        <end position="67"/>
    </location>
</feature>
<feature type="disulfide bond" evidence="7 9 10 12 18 19 20">
    <location>
        <begin position="66"/>
        <end position="127"/>
    </location>
</feature>
<feature type="disulfide bond" evidence="7 9 10 12 18 19 20">
    <location>
        <begin position="73"/>
        <end position="120"/>
    </location>
</feature>
<feature type="disulfide bond" evidence="7 9 10 12 18 19 20">
    <location>
        <begin position="83"/>
        <end position="113"/>
    </location>
</feature>
<feature type="disulfide bond" evidence="7 9 10 12 18 19 20">
    <location>
        <begin position="106"/>
        <end position="118"/>
    </location>
</feature>
<feature type="sequence conflict" description="In Ref. 1; CAA68303." evidence="14" ref="1">
    <original>N</original>
    <variation>K</variation>
    <location>
        <position position="144"/>
    </location>
</feature>
<feature type="helix" evidence="22">
    <location>
        <begin position="24"/>
        <end position="34"/>
    </location>
</feature>
<feature type="helix" evidence="22">
    <location>
        <begin position="40"/>
        <end position="43"/>
    </location>
</feature>
<feature type="strand" evidence="22">
    <location>
        <begin position="45"/>
        <end position="47"/>
    </location>
</feature>
<feature type="turn" evidence="22">
    <location>
        <begin position="48"/>
        <end position="50"/>
    </location>
</feature>
<feature type="strand" evidence="22">
    <location>
        <begin position="51"/>
        <end position="53"/>
    </location>
</feature>
<feature type="helix" evidence="22">
    <location>
        <begin position="62"/>
        <end position="79"/>
    </location>
</feature>
<feature type="helix" evidence="22">
    <location>
        <begin position="81"/>
        <end position="85"/>
    </location>
</feature>
<feature type="strand" evidence="21">
    <location>
        <begin position="86"/>
        <end position="88"/>
    </location>
</feature>
<feature type="helix" evidence="22">
    <location>
        <begin position="90"/>
        <end position="92"/>
    </location>
</feature>
<feature type="strand" evidence="22">
    <location>
        <begin position="97"/>
        <end position="100"/>
    </location>
</feature>
<feature type="strand" evidence="22">
    <location>
        <begin position="103"/>
        <end position="106"/>
    </location>
</feature>
<feature type="helix" evidence="22">
    <location>
        <begin position="112"/>
        <end position="129"/>
    </location>
</feature>
<feature type="helix" evidence="22">
    <location>
        <begin position="135"/>
        <end position="137"/>
    </location>
</feature>
<feature type="helix" evidence="22">
    <location>
        <begin position="142"/>
        <end position="144"/>
    </location>
</feature>
<sequence>MRLLVLAALLTVGAGQAGLNSRALWQFNGMIKCKIPSSEPLLDFNNYGCYCGLGGSGTPVDDLDRCCQTHDNCYKQAKKLDSCKVLVDNPYTNNYSYSCSNNEITCSSENNACEAFICNCDRNAAICFSKVPYNKEHKNLDKKNC</sequence>
<keyword id="KW-0002">3D-structure</keyword>
<keyword id="KW-0068">Autocatalytic cleavage</keyword>
<keyword id="KW-0106">Calcium</keyword>
<keyword id="KW-0903">Direct protein sequencing</keyword>
<keyword id="KW-1015">Disulfide bond</keyword>
<keyword id="KW-0378">Hydrolase</keyword>
<keyword id="KW-0443">Lipid metabolism</keyword>
<keyword id="KW-0479">Metal-binding</keyword>
<keyword id="KW-1208">Phospholipid metabolism</keyword>
<keyword id="KW-0873">Pyrrolidone carboxylic acid</keyword>
<keyword id="KW-1185">Reference proteome</keyword>
<keyword id="KW-0964">Secreted</keyword>
<keyword id="KW-0732">Signal</keyword>
<keyword id="KW-0865">Zymogen</keyword>
<name>PA21B_BOVIN</name>
<evidence type="ECO:0000250" key="1">
    <source>
        <dbReference type="UniProtKB" id="P00592"/>
    </source>
</evidence>
<evidence type="ECO:0000250" key="2">
    <source>
        <dbReference type="UniProtKB" id="P04054"/>
    </source>
</evidence>
<evidence type="ECO:0000250" key="3">
    <source>
        <dbReference type="UniProtKB" id="P04055"/>
    </source>
</evidence>
<evidence type="ECO:0000250" key="4">
    <source>
        <dbReference type="UniProtKB" id="Q9Z0Y2"/>
    </source>
</evidence>
<evidence type="ECO:0000255" key="5">
    <source>
        <dbReference type="PROSITE-ProRule" id="PRU10035"/>
    </source>
</evidence>
<evidence type="ECO:0000255" key="6">
    <source>
        <dbReference type="PROSITE-ProRule" id="PRU10036"/>
    </source>
</evidence>
<evidence type="ECO:0000269" key="7">
    <source>
    </source>
</evidence>
<evidence type="ECO:0000269" key="8">
    <source>
    </source>
</evidence>
<evidence type="ECO:0000269" key="9">
    <source>
    </source>
</evidence>
<evidence type="ECO:0000269" key="10">
    <source>
    </source>
</evidence>
<evidence type="ECO:0000269" key="11">
    <source>
    </source>
</evidence>
<evidence type="ECO:0000269" key="12">
    <source>
    </source>
</evidence>
<evidence type="ECO:0000269" key="13">
    <source ref="2"/>
</evidence>
<evidence type="ECO:0000305" key="14"/>
<evidence type="ECO:0000305" key="15">
    <source>
    </source>
</evidence>
<evidence type="ECO:0000305" key="16">
    <source>
    </source>
</evidence>
<evidence type="ECO:0000305" key="17">
    <source>
    </source>
</evidence>
<evidence type="ECO:0007744" key="18">
    <source>
        <dbReference type="PDB" id="1BP2"/>
    </source>
</evidence>
<evidence type="ECO:0007744" key="19">
    <source>
        <dbReference type="PDB" id="1KVW"/>
    </source>
</evidence>
<evidence type="ECO:0007744" key="20">
    <source>
        <dbReference type="PDB" id="1MKS"/>
    </source>
</evidence>
<evidence type="ECO:0007829" key="21">
    <source>
        <dbReference type="PDB" id="1FDK"/>
    </source>
</evidence>
<evidence type="ECO:0007829" key="22">
    <source>
        <dbReference type="PDB" id="1G4I"/>
    </source>
</evidence>